<feature type="chain" id="PRO_1000146098" description="Peptidase E">
    <location>
        <begin position="1"/>
        <end position="229"/>
    </location>
</feature>
<feature type="active site" description="Charge relay system" evidence="1">
    <location>
        <position position="120"/>
    </location>
</feature>
<feature type="active site" description="Charge relay system" evidence="1">
    <location>
        <position position="135"/>
    </location>
</feature>
<feature type="active site" description="Charge relay system" evidence="1">
    <location>
        <position position="157"/>
    </location>
</feature>
<gene>
    <name evidence="1" type="primary">pepE</name>
    <name type="ordered locus">SPC_4250</name>
</gene>
<protein>
    <recommendedName>
        <fullName evidence="1">Peptidase E</fullName>
        <ecNumber evidence="1">3.4.13.21</ecNumber>
    </recommendedName>
    <alternativeName>
        <fullName evidence="1">Alpha-aspartyl dipeptidase</fullName>
    </alternativeName>
    <alternativeName>
        <fullName evidence="1">Asp-specific dipeptidase</fullName>
    </alternativeName>
    <alternativeName>
        <fullName evidence="1">Dipeptidase E</fullName>
    </alternativeName>
</protein>
<accession>C0Q494</accession>
<evidence type="ECO:0000255" key="1">
    <source>
        <dbReference type="HAMAP-Rule" id="MF_00510"/>
    </source>
</evidence>
<proteinExistence type="inferred from homology"/>
<keyword id="KW-0963">Cytoplasm</keyword>
<keyword id="KW-0224">Dipeptidase</keyword>
<keyword id="KW-0378">Hydrolase</keyword>
<keyword id="KW-0645">Protease</keyword>
<keyword id="KW-0720">Serine protease</keyword>
<sequence length="229" mass="24739">MELLLLSNSTLPGKAWLEHALPLIANQLNGRRSAVFIPFAGVTQTWDEYTDKTAEVLAPLGVNVTGIHRVADPLAAIEKAEIIIVGGGNTFQLLKESRERGLLAPMADRVKRGALYIGWSAGANLACPAIRTTNDMPIVDPNGFDALDLFPLQINPHFTNALPEGHKGETREQRIRELLVVAPELTVIGLPEGNWIQVSNGQAVLGGPNTTWVFKAGEEAVALEAGHRF</sequence>
<organism>
    <name type="scientific">Salmonella paratyphi C (strain RKS4594)</name>
    <dbReference type="NCBI Taxonomy" id="476213"/>
    <lineage>
        <taxon>Bacteria</taxon>
        <taxon>Pseudomonadati</taxon>
        <taxon>Pseudomonadota</taxon>
        <taxon>Gammaproteobacteria</taxon>
        <taxon>Enterobacterales</taxon>
        <taxon>Enterobacteriaceae</taxon>
        <taxon>Salmonella</taxon>
    </lineage>
</organism>
<reference key="1">
    <citation type="journal article" date="2009" name="PLoS ONE">
        <title>Salmonella paratyphi C: genetic divergence from Salmonella choleraesuis and pathogenic convergence with Salmonella typhi.</title>
        <authorList>
            <person name="Liu W.-Q."/>
            <person name="Feng Y."/>
            <person name="Wang Y."/>
            <person name="Zou Q.-H."/>
            <person name="Chen F."/>
            <person name="Guo J.-T."/>
            <person name="Peng Y.-H."/>
            <person name="Jin Y."/>
            <person name="Li Y.-G."/>
            <person name="Hu S.-N."/>
            <person name="Johnston R.N."/>
            <person name="Liu G.-R."/>
            <person name="Liu S.-L."/>
        </authorList>
    </citation>
    <scope>NUCLEOTIDE SEQUENCE [LARGE SCALE GENOMIC DNA]</scope>
    <source>
        <strain>RKS4594</strain>
    </source>
</reference>
<comment type="function">
    <text evidence="1">Hydrolyzes dipeptides containing N-terminal aspartate residues. May play a role in allowing the cell to use peptide aspartate to spare carbon otherwise required for the synthesis of the aspartate family of amino acids.</text>
</comment>
<comment type="catalytic activity">
    <reaction evidence="1">
        <text>Dipeptidase E catalyzes the hydrolysis of dipeptides Asp-|-Xaa. It does not act on peptides with N-terminal Glu, Asn or Gln, nor does it cleave isoaspartyl peptides.</text>
        <dbReference type="EC" id="3.4.13.21"/>
    </reaction>
</comment>
<comment type="subcellular location">
    <subcellularLocation>
        <location evidence="1">Cytoplasm</location>
    </subcellularLocation>
</comment>
<comment type="similarity">
    <text evidence="1">Belongs to the peptidase S51 family.</text>
</comment>
<name>PEPE_SALPC</name>
<dbReference type="EC" id="3.4.13.21" evidence="1"/>
<dbReference type="EMBL" id="CP000857">
    <property type="protein sequence ID" value="ACN48313.1"/>
    <property type="molecule type" value="Genomic_DNA"/>
</dbReference>
<dbReference type="RefSeq" id="WP_000421790.1">
    <property type="nucleotide sequence ID" value="NC_012125.1"/>
</dbReference>
<dbReference type="SMR" id="C0Q494"/>
<dbReference type="MEROPS" id="S51.001"/>
<dbReference type="KEGG" id="sei:SPC_4250"/>
<dbReference type="HOGENOM" id="CLU_071689_0_0_6"/>
<dbReference type="Proteomes" id="UP000001599">
    <property type="component" value="Chromosome"/>
</dbReference>
<dbReference type="GO" id="GO:0005737">
    <property type="term" value="C:cytoplasm"/>
    <property type="evidence" value="ECO:0007669"/>
    <property type="project" value="UniProtKB-SubCell"/>
</dbReference>
<dbReference type="GO" id="GO:0016805">
    <property type="term" value="F:dipeptidase activity"/>
    <property type="evidence" value="ECO:0007669"/>
    <property type="project" value="UniProtKB-UniRule"/>
</dbReference>
<dbReference type="GO" id="GO:0008236">
    <property type="term" value="F:serine-type peptidase activity"/>
    <property type="evidence" value="ECO:0007669"/>
    <property type="project" value="UniProtKB-KW"/>
</dbReference>
<dbReference type="GO" id="GO:0006508">
    <property type="term" value="P:proteolysis"/>
    <property type="evidence" value="ECO:0007669"/>
    <property type="project" value="UniProtKB-UniRule"/>
</dbReference>
<dbReference type="CDD" id="cd03146">
    <property type="entry name" value="GAT1_Peptidase_E"/>
    <property type="match status" value="1"/>
</dbReference>
<dbReference type="FunFam" id="3.40.50.880:FF:000007">
    <property type="entry name" value="Peptidase E"/>
    <property type="match status" value="1"/>
</dbReference>
<dbReference type="Gene3D" id="3.40.50.880">
    <property type="match status" value="1"/>
</dbReference>
<dbReference type="HAMAP" id="MF_00510">
    <property type="entry name" value="Peptidase_E"/>
    <property type="match status" value="1"/>
</dbReference>
<dbReference type="InterPro" id="IPR029062">
    <property type="entry name" value="Class_I_gatase-like"/>
</dbReference>
<dbReference type="InterPro" id="IPR005320">
    <property type="entry name" value="Peptidase_S51"/>
</dbReference>
<dbReference type="InterPro" id="IPR023172">
    <property type="entry name" value="Peptidase_S51_dipeptidase-E"/>
</dbReference>
<dbReference type="NCBIfam" id="NF003642">
    <property type="entry name" value="PRK05282.1"/>
    <property type="match status" value="1"/>
</dbReference>
<dbReference type="PANTHER" id="PTHR20842:SF0">
    <property type="entry name" value="ALPHA-ASPARTYL DIPEPTIDASE"/>
    <property type="match status" value="1"/>
</dbReference>
<dbReference type="PANTHER" id="PTHR20842">
    <property type="entry name" value="PROTEASE S51 ALPHA-ASPARTYL DIPEPTIDASE"/>
    <property type="match status" value="1"/>
</dbReference>
<dbReference type="Pfam" id="PF03575">
    <property type="entry name" value="Peptidase_S51"/>
    <property type="match status" value="1"/>
</dbReference>
<dbReference type="SUPFAM" id="SSF52317">
    <property type="entry name" value="Class I glutamine amidotransferase-like"/>
    <property type="match status" value="1"/>
</dbReference>